<reference key="1">
    <citation type="journal article" date="1994" name="J. Virol.">
        <title>Nucleotide sequence analysis of a 38.5-kilobase-pair region of the genome of human herpesvirus 6 encoding human cytomegalovirus immediate-early gene homologs and transactivating functions.</title>
        <authorList>
            <person name="Nicholas J."/>
            <person name="Martin M.E.D."/>
        </authorList>
    </citation>
    <scope>NUCLEOTIDE SEQUENCE [GENOMIC DNA]</scope>
</reference>
<reference key="2">
    <citation type="journal article" date="1995" name="Virology">
        <title>The DNA sequence of human herpesvirus-6: structure, coding content, and genome evolution.</title>
        <authorList>
            <person name="Gompels U.A."/>
            <person name="Nicholas J."/>
            <person name="Lawrence G.L."/>
            <person name="Jones M."/>
            <person name="Thomson B.J."/>
            <person name="Martin M.E.D."/>
            <person name="Efstathiou S."/>
            <person name="Craxton M.A."/>
            <person name="Macaulay H.A."/>
        </authorList>
    </citation>
    <scope>NUCLEOTIDE SEQUENCE [LARGE SCALE GENOMIC DNA]</scope>
</reference>
<reference key="3">
    <citation type="journal article" date="2007" name="Virology">
        <title>Human herpesvirus-6A and -6B encode viral immunoevasins that downregulate class I MHC molecules.</title>
        <authorList>
            <person name="Glosson N.L."/>
            <person name="Hudson A.W."/>
        </authorList>
    </citation>
    <scope>FUNCTION</scope>
    <scope>SUBCELLULAR LOCATION</scope>
</reference>
<reference key="4">
    <citation type="journal article" date="2021" name="Front. Immunol.">
        <title>The HHV-6A Proteins U20 and U21 Target NKG2D Ligands to Escape Immune Recognition.</title>
        <authorList>
            <person name="Chaouat A.E."/>
            <person name="Seliger B."/>
            <person name="Mandelboim O."/>
            <person name="Schmiedel D."/>
        </authorList>
    </citation>
    <scope>FUNCTION</scope>
    <scope>SUBCELLULAR LOCATION</scope>
</reference>
<keyword id="KW-0325">Glycoprotein</keyword>
<keyword id="KW-1038">Host endoplasmic reticulum</keyword>
<keyword id="KW-1042">Host lysosome</keyword>
<keyword id="KW-1043">Host membrane</keyword>
<keyword id="KW-0945">Host-virus interaction</keyword>
<keyword id="KW-1090">Inhibition of host innate immune response by virus</keyword>
<keyword id="KW-0472">Membrane</keyword>
<keyword id="KW-1185">Reference proteome</keyword>
<keyword id="KW-0812">Transmembrane</keyword>
<keyword id="KW-1133">Transmembrane helix</keyword>
<keyword id="KW-0899">Viral immunoevasion</keyword>
<gene>
    <name type="primary">U21</name>
    <name type="synonym">EJLF2</name>
</gene>
<proteinExistence type="inferred from homology"/>
<feature type="chain" id="PRO_0000116355" description="Glycoprotein U21">
    <location>
        <begin position="1"/>
        <end position="433"/>
    </location>
</feature>
<feature type="topological domain" description="Lumenal" evidence="2">
    <location>
        <begin position="1"/>
        <end position="364"/>
    </location>
</feature>
<feature type="transmembrane region" description="Helical" evidence="2">
    <location>
        <begin position="365"/>
        <end position="385"/>
    </location>
</feature>
<feature type="topological domain" description="Cytoplasmic" evidence="2">
    <location>
        <begin position="386"/>
        <end position="433"/>
    </location>
</feature>
<feature type="glycosylation site" description="N-linked (GlcNAc...) asparagine; by host" evidence="2">
    <location>
        <position position="164"/>
    </location>
</feature>
<protein>
    <recommendedName>
        <fullName>Glycoprotein U21</fullName>
    </recommendedName>
</protein>
<sequence>MMICLVFLCVLTLARGEIYPPICPAPGVGNDEAVRAGELLLEISAYRNQRSGRVELWGSAAVNNQVFYGGMENSQIDYDFGKFLVFRCFQVFNNVHKLLFNTVSSATMHLARKRVQKCGHGKMTFISIQVQCSVNKKSIRLSRMSEASLKKQVLRVAFFLDRNNNSWIADKNFQGEDRTMLRLWNELSTYQQYLISSCNNDVKILSELYGEFRQIALPYDEKLNLNFMPVIRSSSERLFRADDLKCSFSRWLGAEGEFAVCEYSGWGVSRLGKIEIFAEKPLTFDMAWKTVKMRSSGAYTSLFRDDVTWGLIPLDKWVGDKYFCMCTNKESGDNVIVTLPEKNVEKSIQIYDEGSAMLSFAEMTSIILNLMFMGAVAVSVGILGISCFVGLKEIIYFIFVSVDYMWPFCDTLLTTAVNCFFKGRTFLRRELKI</sequence>
<accession>Q69556</accession>
<accession>Q69045</accession>
<name>U21_HHV6U</name>
<organismHost>
    <name type="scientific">Homo sapiens</name>
    <name type="common">Human</name>
    <dbReference type="NCBI Taxonomy" id="9606"/>
</organismHost>
<evidence type="ECO:0000250" key="1"/>
<evidence type="ECO:0000255" key="2"/>
<evidence type="ECO:0000269" key="3">
    <source>
    </source>
</evidence>
<evidence type="ECO:0000269" key="4">
    <source>
    </source>
</evidence>
<evidence type="ECO:0000305" key="5"/>
<dbReference type="EMBL" id="L25528">
    <property type="protein sequence ID" value="AAA16728.1"/>
    <property type="status" value="ALT_INIT"/>
    <property type="molecule type" value="Genomic_DNA"/>
</dbReference>
<dbReference type="EMBL" id="X83413">
    <property type="protein sequence ID" value="CAA58401.1"/>
    <property type="molecule type" value="Genomic_DNA"/>
</dbReference>
<dbReference type="PIR" id="T09315">
    <property type="entry name" value="T09315"/>
</dbReference>
<dbReference type="RefSeq" id="NP_042914.1">
    <property type="nucleotide sequence ID" value="NC_001664.2"/>
</dbReference>
<dbReference type="GlyCosmos" id="Q69556">
    <property type="glycosylation" value="1 site, No reported glycans"/>
</dbReference>
<dbReference type="DNASU" id="1487967"/>
<dbReference type="GeneID" id="1487967"/>
<dbReference type="KEGG" id="vg:1487967"/>
<dbReference type="Proteomes" id="UP000009295">
    <property type="component" value="Segment"/>
</dbReference>
<dbReference type="GO" id="GO:0044167">
    <property type="term" value="C:host cell endoplasmic reticulum membrane"/>
    <property type="evidence" value="ECO:0007669"/>
    <property type="project" value="UniProtKB-SubCell"/>
</dbReference>
<dbReference type="GO" id="GO:0044188">
    <property type="term" value="C:host cell lysosomal membrane"/>
    <property type="evidence" value="ECO:0007669"/>
    <property type="project" value="UniProtKB-SubCell"/>
</dbReference>
<dbReference type="GO" id="GO:0016020">
    <property type="term" value="C:membrane"/>
    <property type="evidence" value="ECO:0007669"/>
    <property type="project" value="UniProtKB-KW"/>
</dbReference>
<dbReference type="GO" id="GO:0052170">
    <property type="term" value="P:symbiont-mediated suppression of host innate immune response"/>
    <property type="evidence" value="ECO:0007669"/>
    <property type="project" value="UniProtKB-KW"/>
</dbReference>
<comment type="function">
    <text evidence="3 4">Plays a role in escape from immune detection by associating with and diverting properly folded class I MHC molecules to an endolysosomal compartment, effectively removing them from the cell surface. In consequence, surface class I molecules are down-regulated and infected cells are masked for immune recognition by cytotoxic T lymphocytes (PubMed:17467766). Also plays a role in the down-regulation of the host stress-induced NKG2D ligand UBPL3, which enables immune cells expressing the NKG2D receptor to recognize and annihilate infected cells prior to viral spread (PubMed:34721381).</text>
</comment>
<comment type="subcellular location">
    <subcellularLocation>
        <location evidence="3">Host endoplasmic reticulum membrane</location>
        <topology evidence="5">Single-pass membrane protein</topology>
    </subcellularLocation>
    <subcellularLocation>
        <location evidence="3 4">Host lysosome membrane</location>
        <topology evidence="5">Single-pass type I membrane protein</topology>
    </subcellularLocation>
</comment>
<comment type="domain">
    <text evidence="1">The ER-lumenal domain associates with class I MHC molecules and is responsible for lysosomal sorting.</text>
</comment>
<comment type="similarity">
    <text evidence="5">Belongs to the herpesviruses U21 family.</text>
</comment>
<comment type="sequence caution" evidence="5">
    <conflict type="erroneous initiation">
        <sequence resource="EMBL-CDS" id="AAA16728"/>
    </conflict>
</comment>
<organism>
    <name type="scientific">Human herpesvirus 6A (strain Uganda-1102)</name>
    <name type="common">HHV-6 variant A</name>
    <name type="synonym">Human B lymphotropic virus</name>
    <dbReference type="NCBI Taxonomy" id="10370"/>
    <lineage>
        <taxon>Viruses</taxon>
        <taxon>Duplodnaviria</taxon>
        <taxon>Heunggongvirae</taxon>
        <taxon>Peploviricota</taxon>
        <taxon>Herviviricetes</taxon>
        <taxon>Herpesvirales</taxon>
        <taxon>Orthoherpesviridae</taxon>
        <taxon>Betaherpesvirinae</taxon>
        <taxon>Roseolovirus</taxon>
        <taxon>Roseolovirus humanbeta6a</taxon>
        <taxon>Human betaherpesvirus 6A</taxon>
    </lineage>
</organism>